<accession>Q8Z990</accession>
<reference key="1">
    <citation type="journal article" date="2001" name="Nature">
        <title>Complete genome sequence of a multiple drug resistant Salmonella enterica serovar Typhi CT18.</title>
        <authorList>
            <person name="Parkhill J."/>
            <person name="Dougan G."/>
            <person name="James K.D."/>
            <person name="Thomson N.R."/>
            <person name="Pickard D."/>
            <person name="Wain J."/>
            <person name="Churcher C.M."/>
            <person name="Mungall K.L."/>
            <person name="Bentley S.D."/>
            <person name="Holden M.T.G."/>
            <person name="Sebaihia M."/>
            <person name="Baker S."/>
            <person name="Basham D."/>
            <person name="Brooks K."/>
            <person name="Chillingworth T."/>
            <person name="Connerton P."/>
            <person name="Cronin A."/>
            <person name="Davis P."/>
            <person name="Davies R.M."/>
            <person name="Dowd L."/>
            <person name="White N."/>
            <person name="Farrar J."/>
            <person name="Feltwell T."/>
            <person name="Hamlin N."/>
            <person name="Haque A."/>
            <person name="Hien T.T."/>
            <person name="Holroyd S."/>
            <person name="Jagels K."/>
            <person name="Krogh A."/>
            <person name="Larsen T.S."/>
            <person name="Leather S."/>
            <person name="Moule S."/>
            <person name="O'Gaora P."/>
            <person name="Parry C."/>
            <person name="Quail M.A."/>
            <person name="Rutherford K.M."/>
            <person name="Simmonds M."/>
            <person name="Skelton J."/>
            <person name="Stevens K."/>
            <person name="Whitehead S."/>
            <person name="Barrell B.G."/>
        </authorList>
    </citation>
    <scope>NUCLEOTIDE SEQUENCE [LARGE SCALE GENOMIC DNA]</scope>
    <source>
        <strain>CT18</strain>
    </source>
</reference>
<reference key="2">
    <citation type="journal article" date="2003" name="J. Bacteriol.">
        <title>Comparative genomics of Salmonella enterica serovar Typhi strains Ty2 and CT18.</title>
        <authorList>
            <person name="Deng W."/>
            <person name="Liou S.-R."/>
            <person name="Plunkett G. III"/>
            <person name="Mayhew G.F."/>
            <person name="Rose D.J."/>
            <person name="Burland V."/>
            <person name="Kodoyianni V."/>
            <person name="Schwartz D.C."/>
            <person name="Blattner F.R."/>
        </authorList>
    </citation>
    <scope>NUCLEOTIDE SEQUENCE [LARGE SCALE GENOMIC DNA]</scope>
    <source>
        <strain>ATCC 700931 / Ty2</strain>
    </source>
</reference>
<organism>
    <name type="scientific">Salmonella typhi</name>
    <dbReference type="NCBI Taxonomy" id="90370"/>
    <lineage>
        <taxon>Bacteria</taxon>
        <taxon>Pseudomonadati</taxon>
        <taxon>Pseudomonadota</taxon>
        <taxon>Gammaproteobacteria</taxon>
        <taxon>Enterobacterales</taxon>
        <taxon>Enterobacteriaceae</taxon>
        <taxon>Salmonella</taxon>
    </lineage>
</organism>
<proteinExistence type="inferred from homology"/>
<evidence type="ECO:0000255" key="1">
    <source>
        <dbReference type="HAMAP-Rule" id="MF_01719"/>
    </source>
</evidence>
<gene>
    <name evidence="1" type="primary">metN1</name>
    <name type="ordered locus">STY0274</name>
    <name type="ordered locus">t0250</name>
</gene>
<keyword id="KW-0029">Amino-acid transport</keyword>
<keyword id="KW-0067">ATP-binding</keyword>
<keyword id="KW-0997">Cell inner membrane</keyword>
<keyword id="KW-1003">Cell membrane</keyword>
<keyword id="KW-0472">Membrane</keyword>
<keyword id="KW-0547">Nucleotide-binding</keyword>
<keyword id="KW-1278">Translocase</keyword>
<keyword id="KW-0813">Transport</keyword>
<feature type="chain" id="PRO_0000092506" description="Methionine import ATP-binding protein MetN 1">
    <location>
        <begin position="1"/>
        <end position="343"/>
    </location>
</feature>
<feature type="domain" description="ABC transporter" evidence="1">
    <location>
        <begin position="2"/>
        <end position="241"/>
    </location>
</feature>
<feature type="binding site" evidence="1">
    <location>
        <begin position="38"/>
        <end position="45"/>
    </location>
    <ligand>
        <name>ATP</name>
        <dbReference type="ChEBI" id="CHEBI:30616"/>
    </ligand>
</feature>
<sequence length="343" mass="37562">MIKLSNITKVFQQGARTIQALNNVSLHVPAGQIYGVIGASGAGKSTLIRCVNLLERPTEGSVMVGGQELTTLSESGLTKARRQIGMIFQHFNLLSSRTVFGNVALPLELDNTPKEEIKRRVTELLDLVGLGDKHDSYPANLSGGQKQRVAIARALASNPKVLLCDEATSALDPATTRSILELLKDINRRLGLTILLITHEMDVVKRICDCVAVISNGELIEQDTVSEVFSHPKTPLAQKFIQSTLHLDIPEDYQARLKASPETDSVPMLRMEFTGQSVDAPLLSETARRFNVNNNIISAQMDYAGGVKFGIMLTEMHGTQEETQAAIAWLQDHHVKVEVLGYV</sequence>
<comment type="function">
    <text evidence="1">Part of the ABC transporter complex MetNIQ involved in methionine import. Responsible for energy coupling to the transport system.</text>
</comment>
<comment type="catalytic activity">
    <reaction evidence="1">
        <text>L-methionine(out) + ATP + H2O = L-methionine(in) + ADP + phosphate + H(+)</text>
        <dbReference type="Rhea" id="RHEA:29779"/>
        <dbReference type="ChEBI" id="CHEBI:15377"/>
        <dbReference type="ChEBI" id="CHEBI:15378"/>
        <dbReference type="ChEBI" id="CHEBI:30616"/>
        <dbReference type="ChEBI" id="CHEBI:43474"/>
        <dbReference type="ChEBI" id="CHEBI:57844"/>
        <dbReference type="ChEBI" id="CHEBI:456216"/>
        <dbReference type="EC" id="7.4.2.11"/>
    </reaction>
</comment>
<comment type="catalytic activity">
    <reaction evidence="1">
        <text>D-methionine(out) + ATP + H2O = D-methionine(in) + ADP + phosphate + H(+)</text>
        <dbReference type="Rhea" id="RHEA:29767"/>
        <dbReference type="ChEBI" id="CHEBI:15377"/>
        <dbReference type="ChEBI" id="CHEBI:15378"/>
        <dbReference type="ChEBI" id="CHEBI:30616"/>
        <dbReference type="ChEBI" id="CHEBI:43474"/>
        <dbReference type="ChEBI" id="CHEBI:57932"/>
        <dbReference type="ChEBI" id="CHEBI:456216"/>
        <dbReference type="EC" id="7.4.2.11"/>
    </reaction>
</comment>
<comment type="subunit">
    <text evidence="1">The complex is composed of two ATP-binding proteins (MetN), two transmembrane proteins (MetI) and a solute-binding protein (MetQ).</text>
</comment>
<comment type="subcellular location">
    <subcellularLocation>
        <location evidence="1">Cell inner membrane</location>
        <topology evidence="1">Peripheral membrane protein</topology>
    </subcellularLocation>
</comment>
<comment type="similarity">
    <text evidence="1">Belongs to the ABC transporter superfamily. Methionine importer (TC 3.A.1.24) family.</text>
</comment>
<dbReference type="EC" id="7.4.2.11" evidence="1"/>
<dbReference type="EMBL" id="AL513382">
    <property type="protein sequence ID" value="CAD08707.1"/>
    <property type="molecule type" value="Genomic_DNA"/>
</dbReference>
<dbReference type="EMBL" id="AE014613">
    <property type="protein sequence ID" value="AAO67979.1"/>
    <property type="molecule type" value="Genomic_DNA"/>
</dbReference>
<dbReference type="RefSeq" id="NP_454856.1">
    <property type="nucleotide sequence ID" value="NC_003198.1"/>
</dbReference>
<dbReference type="SMR" id="Q8Z990"/>
<dbReference type="STRING" id="220341.gene:17584305"/>
<dbReference type="KEGG" id="stt:t0250"/>
<dbReference type="KEGG" id="sty:STY0274"/>
<dbReference type="PATRIC" id="fig|220341.7.peg.275"/>
<dbReference type="eggNOG" id="COG1135">
    <property type="taxonomic scope" value="Bacteria"/>
</dbReference>
<dbReference type="HOGENOM" id="CLU_000604_1_3_6"/>
<dbReference type="OMA" id="FANPKHA"/>
<dbReference type="OrthoDB" id="9802264at2"/>
<dbReference type="Proteomes" id="UP000000541">
    <property type="component" value="Chromosome"/>
</dbReference>
<dbReference type="Proteomes" id="UP000002670">
    <property type="component" value="Chromosome"/>
</dbReference>
<dbReference type="GO" id="GO:0009276">
    <property type="term" value="C:Gram-negative-bacterium-type cell wall"/>
    <property type="evidence" value="ECO:0007669"/>
    <property type="project" value="InterPro"/>
</dbReference>
<dbReference type="GO" id="GO:0005886">
    <property type="term" value="C:plasma membrane"/>
    <property type="evidence" value="ECO:0007669"/>
    <property type="project" value="UniProtKB-SubCell"/>
</dbReference>
<dbReference type="GO" id="GO:0033232">
    <property type="term" value="F:ABC-type D-methionine transporter activity"/>
    <property type="evidence" value="ECO:0007669"/>
    <property type="project" value="UniProtKB-EC"/>
</dbReference>
<dbReference type="GO" id="GO:0005524">
    <property type="term" value="F:ATP binding"/>
    <property type="evidence" value="ECO:0007669"/>
    <property type="project" value="UniProtKB-KW"/>
</dbReference>
<dbReference type="GO" id="GO:0016887">
    <property type="term" value="F:ATP hydrolysis activity"/>
    <property type="evidence" value="ECO:0007669"/>
    <property type="project" value="InterPro"/>
</dbReference>
<dbReference type="CDD" id="cd03258">
    <property type="entry name" value="ABC_MetN_methionine_transporter"/>
    <property type="match status" value="1"/>
</dbReference>
<dbReference type="FunFam" id="3.30.70.260:FF:000014">
    <property type="entry name" value="Methionine import ATP-binding protein MetN"/>
    <property type="match status" value="1"/>
</dbReference>
<dbReference type="FunFam" id="3.40.50.300:FF:000233">
    <property type="entry name" value="Methionine import ATP-binding protein MetN"/>
    <property type="match status" value="1"/>
</dbReference>
<dbReference type="Gene3D" id="3.30.70.260">
    <property type="match status" value="1"/>
</dbReference>
<dbReference type="Gene3D" id="3.40.50.300">
    <property type="entry name" value="P-loop containing nucleotide triphosphate hydrolases"/>
    <property type="match status" value="1"/>
</dbReference>
<dbReference type="InterPro" id="IPR003593">
    <property type="entry name" value="AAA+_ATPase"/>
</dbReference>
<dbReference type="InterPro" id="IPR012692">
    <property type="entry name" value="ABC_MetN_proteobac"/>
</dbReference>
<dbReference type="InterPro" id="IPR003439">
    <property type="entry name" value="ABC_transporter-like_ATP-bd"/>
</dbReference>
<dbReference type="InterPro" id="IPR017871">
    <property type="entry name" value="ABC_transporter-like_CS"/>
</dbReference>
<dbReference type="InterPro" id="IPR045865">
    <property type="entry name" value="ACT-like_dom_sf"/>
</dbReference>
<dbReference type="InterPro" id="IPR041701">
    <property type="entry name" value="MetN_ABC"/>
</dbReference>
<dbReference type="InterPro" id="IPR050086">
    <property type="entry name" value="MetN_ABC_transporter-like"/>
</dbReference>
<dbReference type="InterPro" id="IPR018449">
    <property type="entry name" value="NIL_domain"/>
</dbReference>
<dbReference type="InterPro" id="IPR027417">
    <property type="entry name" value="P-loop_NTPase"/>
</dbReference>
<dbReference type="NCBIfam" id="TIGR02314">
    <property type="entry name" value="ABC_MetN"/>
    <property type="match status" value="1"/>
</dbReference>
<dbReference type="PANTHER" id="PTHR43166">
    <property type="entry name" value="AMINO ACID IMPORT ATP-BINDING PROTEIN"/>
    <property type="match status" value="1"/>
</dbReference>
<dbReference type="PANTHER" id="PTHR43166:SF30">
    <property type="entry name" value="METHIONINE IMPORT ATP-BINDING PROTEIN METN"/>
    <property type="match status" value="1"/>
</dbReference>
<dbReference type="Pfam" id="PF00005">
    <property type="entry name" value="ABC_tran"/>
    <property type="match status" value="1"/>
</dbReference>
<dbReference type="Pfam" id="PF09383">
    <property type="entry name" value="NIL"/>
    <property type="match status" value="1"/>
</dbReference>
<dbReference type="SMART" id="SM00382">
    <property type="entry name" value="AAA"/>
    <property type="match status" value="1"/>
</dbReference>
<dbReference type="SMART" id="SM00930">
    <property type="entry name" value="NIL"/>
    <property type="match status" value="1"/>
</dbReference>
<dbReference type="SUPFAM" id="SSF55021">
    <property type="entry name" value="ACT-like"/>
    <property type="match status" value="1"/>
</dbReference>
<dbReference type="SUPFAM" id="SSF52540">
    <property type="entry name" value="P-loop containing nucleoside triphosphate hydrolases"/>
    <property type="match status" value="1"/>
</dbReference>
<dbReference type="PROSITE" id="PS00211">
    <property type="entry name" value="ABC_TRANSPORTER_1"/>
    <property type="match status" value="1"/>
</dbReference>
<dbReference type="PROSITE" id="PS50893">
    <property type="entry name" value="ABC_TRANSPORTER_2"/>
    <property type="match status" value="1"/>
</dbReference>
<dbReference type="PROSITE" id="PS51264">
    <property type="entry name" value="METN"/>
    <property type="match status" value="1"/>
</dbReference>
<name>METN1_SALTI</name>
<protein>
    <recommendedName>
        <fullName evidence="1">Methionine import ATP-binding protein MetN 1</fullName>
        <ecNumber evidence="1">7.4.2.11</ecNumber>
    </recommendedName>
</protein>